<feature type="chain" id="PRO_0000260839" description="Large ribosomal subunit protein uL6">
    <location>
        <begin position="1"/>
        <end position="179"/>
    </location>
</feature>
<protein>
    <recommendedName>
        <fullName evidence="1">Large ribosomal subunit protein uL6</fullName>
    </recommendedName>
    <alternativeName>
        <fullName evidence="2">50S ribosomal protein L6</fullName>
    </alternativeName>
</protein>
<reference key="1">
    <citation type="journal article" date="2004" name="Nucleic Acids Res.">
        <title>The genome sequence of Bacillus cereus ATCC 10987 reveals metabolic adaptations and a large plasmid related to Bacillus anthracis pXO1.</title>
        <authorList>
            <person name="Rasko D.A."/>
            <person name="Ravel J."/>
            <person name="Oekstad O.A."/>
            <person name="Helgason E."/>
            <person name="Cer R.Z."/>
            <person name="Jiang L."/>
            <person name="Shores K.A."/>
            <person name="Fouts D.E."/>
            <person name="Tourasse N.J."/>
            <person name="Angiuoli S.V."/>
            <person name="Kolonay J.F."/>
            <person name="Nelson W.C."/>
            <person name="Kolstoe A.-B."/>
            <person name="Fraser C.M."/>
            <person name="Read T.D."/>
        </authorList>
    </citation>
    <scope>NUCLEOTIDE SEQUENCE [LARGE SCALE GENOMIC DNA]</scope>
    <source>
        <strain>ATCC 10987 / NRS 248</strain>
    </source>
</reference>
<organism>
    <name type="scientific">Bacillus cereus (strain ATCC 10987 / NRS 248)</name>
    <dbReference type="NCBI Taxonomy" id="222523"/>
    <lineage>
        <taxon>Bacteria</taxon>
        <taxon>Bacillati</taxon>
        <taxon>Bacillota</taxon>
        <taxon>Bacilli</taxon>
        <taxon>Bacillales</taxon>
        <taxon>Bacillaceae</taxon>
        <taxon>Bacillus</taxon>
        <taxon>Bacillus cereus group</taxon>
    </lineage>
</organism>
<dbReference type="EMBL" id="AE017194">
    <property type="protein sequence ID" value="AAS39061.1"/>
    <property type="molecule type" value="Genomic_DNA"/>
</dbReference>
<dbReference type="SMR" id="Q73F81"/>
<dbReference type="KEGG" id="bca:BCE_0125"/>
<dbReference type="HOGENOM" id="CLU_065464_1_2_9"/>
<dbReference type="Proteomes" id="UP000002527">
    <property type="component" value="Chromosome"/>
</dbReference>
<dbReference type="GO" id="GO:0022625">
    <property type="term" value="C:cytosolic large ribosomal subunit"/>
    <property type="evidence" value="ECO:0007669"/>
    <property type="project" value="TreeGrafter"/>
</dbReference>
<dbReference type="GO" id="GO:0019843">
    <property type="term" value="F:rRNA binding"/>
    <property type="evidence" value="ECO:0007669"/>
    <property type="project" value="UniProtKB-UniRule"/>
</dbReference>
<dbReference type="GO" id="GO:0003735">
    <property type="term" value="F:structural constituent of ribosome"/>
    <property type="evidence" value="ECO:0007669"/>
    <property type="project" value="InterPro"/>
</dbReference>
<dbReference type="GO" id="GO:0002181">
    <property type="term" value="P:cytoplasmic translation"/>
    <property type="evidence" value="ECO:0007669"/>
    <property type="project" value="TreeGrafter"/>
</dbReference>
<dbReference type="FunFam" id="3.90.930.12:FF:000001">
    <property type="entry name" value="50S ribosomal protein L6"/>
    <property type="match status" value="1"/>
</dbReference>
<dbReference type="FunFam" id="3.90.930.12:FF:000002">
    <property type="entry name" value="50S ribosomal protein L6"/>
    <property type="match status" value="1"/>
</dbReference>
<dbReference type="Gene3D" id="3.90.930.12">
    <property type="entry name" value="Ribosomal protein L6, alpha-beta domain"/>
    <property type="match status" value="2"/>
</dbReference>
<dbReference type="HAMAP" id="MF_01365_B">
    <property type="entry name" value="Ribosomal_uL6_B"/>
    <property type="match status" value="1"/>
</dbReference>
<dbReference type="InterPro" id="IPR000702">
    <property type="entry name" value="Ribosomal_uL6-like"/>
</dbReference>
<dbReference type="InterPro" id="IPR036789">
    <property type="entry name" value="Ribosomal_uL6-like_a/b-dom_sf"/>
</dbReference>
<dbReference type="InterPro" id="IPR020040">
    <property type="entry name" value="Ribosomal_uL6_a/b-dom"/>
</dbReference>
<dbReference type="InterPro" id="IPR019906">
    <property type="entry name" value="Ribosomal_uL6_bac-type"/>
</dbReference>
<dbReference type="InterPro" id="IPR002358">
    <property type="entry name" value="Ribosomal_uL6_CS"/>
</dbReference>
<dbReference type="NCBIfam" id="TIGR03654">
    <property type="entry name" value="L6_bact"/>
    <property type="match status" value="1"/>
</dbReference>
<dbReference type="PANTHER" id="PTHR11655">
    <property type="entry name" value="60S/50S RIBOSOMAL PROTEIN L6/L9"/>
    <property type="match status" value="1"/>
</dbReference>
<dbReference type="PANTHER" id="PTHR11655:SF14">
    <property type="entry name" value="LARGE RIBOSOMAL SUBUNIT PROTEIN UL6M"/>
    <property type="match status" value="1"/>
</dbReference>
<dbReference type="Pfam" id="PF00347">
    <property type="entry name" value="Ribosomal_L6"/>
    <property type="match status" value="2"/>
</dbReference>
<dbReference type="PIRSF" id="PIRSF002162">
    <property type="entry name" value="Ribosomal_L6"/>
    <property type="match status" value="1"/>
</dbReference>
<dbReference type="PRINTS" id="PR00059">
    <property type="entry name" value="RIBOSOMALL6"/>
</dbReference>
<dbReference type="SUPFAM" id="SSF56053">
    <property type="entry name" value="Ribosomal protein L6"/>
    <property type="match status" value="2"/>
</dbReference>
<dbReference type="PROSITE" id="PS00525">
    <property type="entry name" value="RIBOSOMAL_L6_1"/>
    <property type="match status" value="1"/>
</dbReference>
<comment type="function">
    <text evidence="1">This protein binds to the 23S rRNA, and is important in its secondary structure. It is located near the subunit interface in the base of the L7/L12 stalk, and near the tRNA binding site of the peptidyltransferase center.</text>
</comment>
<comment type="subunit">
    <text evidence="1">Part of the 50S ribosomal subunit.</text>
</comment>
<comment type="similarity">
    <text evidence="1">Belongs to the universal ribosomal protein uL6 family.</text>
</comment>
<gene>
    <name evidence="1" type="primary">rplF</name>
    <name type="ordered locus">BCE_0125</name>
</gene>
<proteinExistence type="inferred from homology"/>
<name>RL6_BACC1</name>
<sequence>MSRIGKKILEIPAGVTITVAEDNTVTVKGPKGELTRTFNADMLIKIEENTLTVERPSEQKEHRALHGTTRALIGNMVEGVTEGFARGLELVGVGYRAQKQGDKLVLSVGYSHPVEMTPEAGLEVEVPAPTKIVIKGIDKQRVGEFAANIRAVRAPEPYKGKGIRYEGEVVRRKEGKTAK</sequence>
<keyword id="KW-0687">Ribonucleoprotein</keyword>
<keyword id="KW-0689">Ribosomal protein</keyword>
<keyword id="KW-0694">RNA-binding</keyword>
<keyword id="KW-0699">rRNA-binding</keyword>
<evidence type="ECO:0000255" key="1">
    <source>
        <dbReference type="HAMAP-Rule" id="MF_01365"/>
    </source>
</evidence>
<evidence type="ECO:0000305" key="2"/>
<accession>Q73F81</accession>